<protein>
    <recommendedName>
        <fullName evidence="1">ATP-dependent Clp protease proteolytic subunit</fullName>
        <ecNumber evidence="1">3.4.21.92</ecNumber>
    </recommendedName>
    <alternativeName>
        <fullName evidence="1">Endopeptidase Clp</fullName>
    </alternativeName>
</protein>
<dbReference type="EC" id="3.4.21.92" evidence="1"/>
<dbReference type="EMBL" id="CP000024">
    <property type="protein sequence ID" value="AAV61959.1"/>
    <property type="molecule type" value="Genomic_DNA"/>
</dbReference>
<dbReference type="RefSeq" id="WP_002949732.1">
    <property type="nucleotide sequence ID" value="NC_006449.1"/>
</dbReference>
<dbReference type="SMR" id="Q5M1A8"/>
<dbReference type="MEROPS" id="S14.001"/>
<dbReference type="KEGG" id="stc:str0356"/>
<dbReference type="HOGENOM" id="CLU_058707_3_2_9"/>
<dbReference type="GO" id="GO:0005737">
    <property type="term" value="C:cytoplasm"/>
    <property type="evidence" value="ECO:0007669"/>
    <property type="project" value="UniProtKB-SubCell"/>
</dbReference>
<dbReference type="GO" id="GO:0009368">
    <property type="term" value="C:endopeptidase Clp complex"/>
    <property type="evidence" value="ECO:0007669"/>
    <property type="project" value="TreeGrafter"/>
</dbReference>
<dbReference type="GO" id="GO:0004176">
    <property type="term" value="F:ATP-dependent peptidase activity"/>
    <property type="evidence" value="ECO:0007669"/>
    <property type="project" value="InterPro"/>
</dbReference>
<dbReference type="GO" id="GO:0051117">
    <property type="term" value="F:ATPase binding"/>
    <property type="evidence" value="ECO:0007669"/>
    <property type="project" value="TreeGrafter"/>
</dbReference>
<dbReference type="GO" id="GO:0004252">
    <property type="term" value="F:serine-type endopeptidase activity"/>
    <property type="evidence" value="ECO:0007669"/>
    <property type="project" value="UniProtKB-UniRule"/>
</dbReference>
<dbReference type="GO" id="GO:0006515">
    <property type="term" value="P:protein quality control for misfolded or incompletely synthesized proteins"/>
    <property type="evidence" value="ECO:0007669"/>
    <property type="project" value="TreeGrafter"/>
</dbReference>
<dbReference type="CDD" id="cd07017">
    <property type="entry name" value="S14_ClpP_2"/>
    <property type="match status" value="1"/>
</dbReference>
<dbReference type="FunFam" id="3.90.226.10:FF:000014">
    <property type="entry name" value="ATP-dependent Clp protease proteolytic subunit"/>
    <property type="match status" value="1"/>
</dbReference>
<dbReference type="Gene3D" id="3.90.226.10">
    <property type="entry name" value="2-enoyl-CoA Hydratase, Chain A, domain 1"/>
    <property type="match status" value="1"/>
</dbReference>
<dbReference type="HAMAP" id="MF_00444">
    <property type="entry name" value="ClpP"/>
    <property type="match status" value="1"/>
</dbReference>
<dbReference type="InterPro" id="IPR001907">
    <property type="entry name" value="ClpP"/>
</dbReference>
<dbReference type="InterPro" id="IPR029045">
    <property type="entry name" value="ClpP/crotonase-like_dom_sf"/>
</dbReference>
<dbReference type="InterPro" id="IPR023562">
    <property type="entry name" value="ClpP/TepA"/>
</dbReference>
<dbReference type="InterPro" id="IPR033135">
    <property type="entry name" value="ClpP_His_AS"/>
</dbReference>
<dbReference type="InterPro" id="IPR018215">
    <property type="entry name" value="ClpP_Ser_AS"/>
</dbReference>
<dbReference type="NCBIfam" id="NF001368">
    <property type="entry name" value="PRK00277.1"/>
    <property type="match status" value="1"/>
</dbReference>
<dbReference type="NCBIfam" id="NF009205">
    <property type="entry name" value="PRK12553.1"/>
    <property type="match status" value="1"/>
</dbReference>
<dbReference type="PANTHER" id="PTHR10381">
    <property type="entry name" value="ATP-DEPENDENT CLP PROTEASE PROTEOLYTIC SUBUNIT"/>
    <property type="match status" value="1"/>
</dbReference>
<dbReference type="PANTHER" id="PTHR10381:SF70">
    <property type="entry name" value="ATP-DEPENDENT CLP PROTEASE PROTEOLYTIC SUBUNIT"/>
    <property type="match status" value="1"/>
</dbReference>
<dbReference type="Pfam" id="PF00574">
    <property type="entry name" value="CLP_protease"/>
    <property type="match status" value="1"/>
</dbReference>
<dbReference type="PRINTS" id="PR00127">
    <property type="entry name" value="CLPPROTEASEP"/>
</dbReference>
<dbReference type="SUPFAM" id="SSF52096">
    <property type="entry name" value="ClpP/crotonase"/>
    <property type="match status" value="1"/>
</dbReference>
<dbReference type="PROSITE" id="PS00382">
    <property type="entry name" value="CLP_PROTEASE_HIS"/>
    <property type="match status" value="1"/>
</dbReference>
<dbReference type="PROSITE" id="PS00381">
    <property type="entry name" value="CLP_PROTEASE_SER"/>
    <property type="match status" value="1"/>
</dbReference>
<name>CLPP_STRT1</name>
<evidence type="ECO:0000255" key="1">
    <source>
        <dbReference type="HAMAP-Rule" id="MF_00444"/>
    </source>
</evidence>
<proteinExistence type="inferred from homology"/>
<accession>Q5M1A8</accession>
<organism>
    <name type="scientific">Streptococcus thermophilus (strain CNRZ 1066)</name>
    <dbReference type="NCBI Taxonomy" id="299768"/>
    <lineage>
        <taxon>Bacteria</taxon>
        <taxon>Bacillati</taxon>
        <taxon>Bacillota</taxon>
        <taxon>Bacilli</taxon>
        <taxon>Lactobacillales</taxon>
        <taxon>Streptococcaceae</taxon>
        <taxon>Streptococcus</taxon>
    </lineage>
</organism>
<gene>
    <name evidence="1" type="primary">clpP</name>
    <name type="ordered locus">str0356</name>
</gene>
<keyword id="KW-0963">Cytoplasm</keyword>
<keyword id="KW-0378">Hydrolase</keyword>
<keyword id="KW-0645">Protease</keyword>
<keyword id="KW-0720">Serine protease</keyword>
<comment type="function">
    <text evidence="1">Cleaves peptides in various proteins in a process that requires ATP hydrolysis. Has a chymotrypsin-like activity. Plays a major role in the degradation of misfolded proteins.</text>
</comment>
<comment type="catalytic activity">
    <reaction evidence="1">
        <text>Hydrolysis of proteins to small peptides in the presence of ATP and magnesium. alpha-casein is the usual test substrate. In the absence of ATP, only oligopeptides shorter than five residues are hydrolyzed (such as succinyl-Leu-Tyr-|-NHMec, and Leu-Tyr-Leu-|-Tyr-Trp, in which cleavage of the -Tyr-|-Leu- and -Tyr-|-Trp bonds also occurs).</text>
        <dbReference type="EC" id="3.4.21.92"/>
    </reaction>
</comment>
<comment type="subunit">
    <text evidence="1">Fourteen ClpP subunits assemble into 2 heptameric rings which stack back to back to give a disk-like structure with a central cavity, resembling the structure of eukaryotic proteasomes.</text>
</comment>
<comment type="subcellular location">
    <subcellularLocation>
        <location evidence="1">Cytoplasm</location>
    </subcellularLocation>
</comment>
<comment type="similarity">
    <text evidence="1">Belongs to the peptidase S14 family.</text>
</comment>
<sequence length="196" mass="21578">MIPVVIEQTSRGERSYDIYSRLLKDRIIMLTGPIEDNMANSIIAQLLFLDAQDNTKDIYLYVNTPGGSVSAGLAIVDTMNFIKSDVQTIVMGMAASMGTIIASSGTKGKRFMLPNAEYMIHQPMGGTGGGTQQTDMAIAAEHLLKTRNNLEQILADNSGQPIEKVHVDAERDNWMSAQETLEYGFIDEIMTNNQLK</sequence>
<feature type="chain" id="PRO_0000179677" description="ATP-dependent Clp protease proteolytic subunit">
    <location>
        <begin position="1"/>
        <end position="196"/>
    </location>
</feature>
<feature type="active site" description="Nucleophile" evidence="1">
    <location>
        <position position="96"/>
    </location>
</feature>
<feature type="active site" evidence="1">
    <location>
        <position position="121"/>
    </location>
</feature>
<reference key="1">
    <citation type="journal article" date="2004" name="Nat. Biotechnol.">
        <title>Complete sequence and comparative genome analysis of the dairy bacterium Streptococcus thermophilus.</title>
        <authorList>
            <person name="Bolotin A."/>
            <person name="Quinquis B."/>
            <person name="Renault P."/>
            <person name="Sorokin A."/>
            <person name="Ehrlich S.D."/>
            <person name="Kulakauskas S."/>
            <person name="Lapidus A."/>
            <person name="Goltsman E."/>
            <person name="Mazur M."/>
            <person name="Pusch G.D."/>
            <person name="Fonstein M."/>
            <person name="Overbeek R."/>
            <person name="Kyprides N."/>
            <person name="Purnelle B."/>
            <person name="Prozzi D."/>
            <person name="Ngui K."/>
            <person name="Masuy D."/>
            <person name="Hancy F."/>
            <person name="Burteau S."/>
            <person name="Boutry M."/>
            <person name="Delcour J."/>
            <person name="Goffeau A."/>
            <person name="Hols P."/>
        </authorList>
    </citation>
    <scope>NUCLEOTIDE SEQUENCE [LARGE SCALE GENOMIC DNA]</scope>
    <source>
        <strain>CNRZ 1066</strain>
    </source>
</reference>